<dbReference type="EMBL" id="AF091458">
    <property type="protein sequence ID" value="AAF04972.1"/>
    <property type="molecule type" value="mRNA"/>
</dbReference>
<dbReference type="EMBL" id="AJ011675">
    <property type="protein sequence ID" value="CAB56800.1"/>
    <property type="molecule type" value="mRNA"/>
</dbReference>
<dbReference type="EMBL" id="AP005175">
    <property type="protein sequence ID" value="BAC83880.1"/>
    <property type="molecule type" value="Genomic_DNA"/>
</dbReference>
<dbReference type="EMBL" id="AP008213">
    <property type="protein sequence ID" value="BAF22139.1"/>
    <property type="molecule type" value="Genomic_DNA"/>
</dbReference>
<dbReference type="EMBL" id="AP014963">
    <property type="protein sequence ID" value="BAT02559.1"/>
    <property type="molecule type" value="Genomic_DNA"/>
</dbReference>
<dbReference type="EMBL" id="CM000144">
    <property type="protein sequence ID" value="EEE67551.1"/>
    <property type="molecule type" value="Genomic_DNA"/>
</dbReference>
<dbReference type="RefSeq" id="XP_015647484.1">
    <property type="nucleotide sequence ID" value="XM_015791998.1"/>
</dbReference>
<dbReference type="SMR" id="Q0D4T4"/>
<dbReference type="FunCoup" id="Q0D4T4">
    <property type="interactions" value="32"/>
</dbReference>
<dbReference type="IntAct" id="Q0D4T4">
    <property type="interactions" value="2"/>
</dbReference>
<dbReference type="STRING" id="39947.Q0D4T4"/>
<dbReference type="PaxDb" id="39947-Q0D4T4"/>
<dbReference type="EnsemblPlants" id="Os07t0605200-01">
    <property type="protein sequence ID" value="Os07t0605200-01"/>
    <property type="gene ID" value="Os07g0605200"/>
</dbReference>
<dbReference type="Gramene" id="Os07t0605200-01">
    <property type="protein sequence ID" value="Os07t0605200-01"/>
    <property type="gene ID" value="Os07g0605200"/>
</dbReference>
<dbReference type="KEGG" id="dosa:Os07g0605200"/>
<dbReference type="eggNOG" id="KOG0014">
    <property type="taxonomic scope" value="Eukaryota"/>
</dbReference>
<dbReference type="HOGENOM" id="CLU_053053_0_2_1"/>
<dbReference type="InParanoid" id="Q0D4T4"/>
<dbReference type="OMA" id="WGDEYGI"/>
<dbReference type="OrthoDB" id="1933443at2759"/>
<dbReference type="Proteomes" id="UP000000763">
    <property type="component" value="Chromosome 7"/>
</dbReference>
<dbReference type="Proteomes" id="UP000007752">
    <property type="component" value="Chromosome 7"/>
</dbReference>
<dbReference type="Proteomes" id="UP000059680">
    <property type="component" value="Chromosome 7"/>
</dbReference>
<dbReference type="GO" id="GO:0005634">
    <property type="term" value="C:nucleus"/>
    <property type="evidence" value="ECO:0007669"/>
    <property type="project" value="UniProtKB-SubCell"/>
</dbReference>
<dbReference type="GO" id="GO:0000981">
    <property type="term" value="F:DNA-binding transcription factor activity, RNA polymerase II-specific"/>
    <property type="evidence" value="ECO:0000318"/>
    <property type="project" value="GO_Central"/>
</dbReference>
<dbReference type="GO" id="GO:0046983">
    <property type="term" value="F:protein dimerization activity"/>
    <property type="evidence" value="ECO:0007669"/>
    <property type="project" value="InterPro"/>
</dbReference>
<dbReference type="GO" id="GO:0000978">
    <property type="term" value="F:RNA polymerase II cis-regulatory region sequence-specific DNA binding"/>
    <property type="evidence" value="ECO:0000318"/>
    <property type="project" value="GO_Central"/>
</dbReference>
<dbReference type="GO" id="GO:0030154">
    <property type="term" value="P:cell differentiation"/>
    <property type="evidence" value="ECO:0007669"/>
    <property type="project" value="UniProtKB-KW"/>
</dbReference>
<dbReference type="GO" id="GO:0009908">
    <property type="term" value="P:flower development"/>
    <property type="evidence" value="ECO:0007669"/>
    <property type="project" value="UniProtKB-KW"/>
</dbReference>
<dbReference type="GO" id="GO:0045944">
    <property type="term" value="P:positive regulation of transcription by RNA polymerase II"/>
    <property type="evidence" value="ECO:0007669"/>
    <property type="project" value="InterPro"/>
</dbReference>
<dbReference type="GO" id="GO:0006357">
    <property type="term" value="P:regulation of transcription by RNA polymerase II"/>
    <property type="evidence" value="ECO:0000318"/>
    <property type="project" value="GO_Central"/>
</dbReference>
<dbReference type="CDD" id="cd00265">
    <property type="entry name" value="MADS_MEF2_like"/>
    <property type="match status" value="1"/>
</dbReference>
<dbReference type="FunFam" id="3.40.1810.10:FF:000003">
    <property type="entry name" value="MADS-box transcription factor MADS-MC"/>
    <property type="match status" value="1"/>
</dbReference>
<dbReference type="Gene3D" id="3.40.1810.10">
    <property type="entry name" value="Transcription factor, MADS-box"/>
    <property type="match status" value="1"/>
</dbReference>
<dbReference type="InterPro" id="IPR050142">
    <property type="entry name" value="MADS-box/MEF2_TF"/>
</dbReference>
<dbReference type="InterPro" id="IPR033896">
    <property type="entry name" value="MEF2-like_N"/>
</dbReference>
<dbReference type="InterPro" id="IPR002487">
    <property type="entry name" value="TF_Kbox"/>
</dbReference>
<dbReference type="InterPro" id="IPR002100">
    <property type="entry name" value="TF_MADSbox"/>
</dbReference>
<dbReference type="InterPro" id="IPR036879">
    <property type="entry name" value="TF_MADSbox_sf"/>
</dbReference>
<dbReference type="PANTHER" id="PTHR48019">
    <property type="entry name" value="SERUM RESPONSE FACTOR HOMOLOG"/>
    <property type="match status" value="1"/>
</dbReference>
<dbReference type="Pfam" id="PF01486">
    <property type="entry name" value="K-box"/>
    <property type="match status" value="1"/>
</dbReference>
<dbReference type="Pfam" id="PF00319">
    <property type="entry name" value="SRF-TF"/>
    <property type="match status" value="1"/>
</dbReference>
<dbReference type="PRINTS" id="PR00404">
    <property type="entry name" value="MADSDOMAIN"/>
</dbReference>
<dbReference type="SMART" id="SM00432">
    <property type="entry name" value="MADS"/>
    <property type="match status" value="1"/>
</dbReference>
<dbReference type="SUPFAM" id="SSF55455">
    <property type="entry name" value="SRF-like"/>
    <property type="match status" value="1"/>
</dbReference>
<dbReference type="PROSITE" id="PS51297">
    <property type="entry name" value="K_BOX"/>
    <property type="match status" value="1"/>
</dbReference>
<dbReference type="PROSITE" id="PS50066">
    <property type="entry name" value="MADS_BOX_2"/>
    <property type="match status" value="1"/>
</dbReference>
<organism>
    <name type="scientific">Oryza sativa subsp. japonica</name>
    <name type="common">Rice</name>
    <dbReference type="NCBI Taxonomy" id="39947"/>
    <lineage>
        <taxon>Eukaryota</taxon>
        <taxon>Viridiplantae</taxon>
        <taxon>Streptophyta</taxon>
        <taxon>Embryophyta</taxon>
        <taxon>Tracheophyta</taxon>
        <taxon>Spermatophyta</taxon>
        <taxon>Magnoliopsida</taxon>
        <taxon>Liliopsida</taxon>
        <taxon>Poales</taxon>
        <taxon>Poaceae</taxon>
        <taxon>BOP clade</taxon>
        <taxon>Oryzoideae</taxon>
        <taxon>Oryzeae</taxon>
        <taxon>Oryzinae</taxon>
        <taxon>Oryza</taxon>
        <taxon>Oryza sativa</taxon>
    </lineage>
</organism>
<comment type="function">
    <text evidence="5 6">Probable transcription factor that may promote floral transition phase and differentiation program of the vegetative shoot.</text>
</comment>
<comment type="subunit">
    <text evidence="4 5 6">Heterodimer or heterotrimer. Interacts with the K-box of MADS6. Also able to interact directly with MADS7, MADS8 and MADS47. The dimer composed of MADS18 and MADS6 forms a ternary complex with histone fold protein NF-YB1.</text>
</comment>
<comment type="interaction">
    <interactant intactId="EBI-627967">
        <id>Q0D4T4</id>
    </interactant>
    <interactant intactId="EBI-627980">
        <id>Q6EU39</id>
        <label>MADS6</label>
    </interactant>
    <organismsDiffer>false</organismsDiffer>
    <experiments>3</experiments>
</comment>
<comment type="subcellular location">
    <subcellularLocation>
        <location evidence="7">Nucleus</location>
    </subcellularLocation>
</comment>
<comment type="tissue specificity">
    <text evidence="5 6">Widely expressed. Transcripts accumulate to higher levels in organs that retain meristematic characteristics: in the apical meristem and in the meristematic leaf primordia formed on its flank; in the developing panicle at the early stage of rachis-branch primordia differentiation; in the procambium of the rachis branches and in all floral organ primordia.</text>
</comment>
<comment type="developmental stage">
    <text evidence="6">Not expressed at early stages of plant development. First detected in leaves 4 weeks after germination, and expression levels are increased when the plant reaches the reproductive stage.</text>
</comment>
<comment type="miscellaneous">
    <text>Plants overexpressing MADS18 remain very small in size and flower at 105 days after germination compared to wild-type plants which flower at 140 days after germination.</text>
</comment>
<evidence type="ECO:0000255" key="1">
    <source>
        <dbReference type="PROSITE-ProRule" id="PRU00251"/>
    </source>
</evidence>
<evidence type="ECO:0000255" key="2">
    <source>
        <dbReference type="PROSITE-ProRule" id="PRU00629"/>
    </source>
</evidence>
<evidence type="ECO:0000256" key="3">
    <source>
        <dbReference type="SAM" id="MobiDB-lite"/>
    </source>
</evidence>
<evidence type="ECO:0000269" key="4">
    <source>
    </source>
</evidence>
<evidence type="ECO:0000269" key="5">
    <source>
    </source>
</evidence>
<evidence type="ECO:0000269" key="6">
    <source>
    </source>
</evidence>
<evidence type="ECO:0000305" key="7"/>
<evidence type="ECO:0000312" key="8">
    <source>
        <dbReference type="EMBL" id="EEE67551.1"/>
    </source>
</evidence>
<accession>Q0D4T4</accession>
<accession>B9FYB4</accession>
<accession>Q6Z4G0</accession>
<accession>Q9M7C5</accession>
<accession>Q9SEV1</accession>
<accession>Q9SMB3</accession>
<feature type="chain" id="PRO_0000199502" description="MADS-box transcription factor 18">
    <location>
        <begin position="1"/>
        <end position="249"/>
    </location>
</feature>
<feature type="domain" description="MADS-box" evidence="1">
    <location>
        <begin position="1"/>
        <end position="61"/>
    </location>
</feature>
<feature type="domain" description="K-box" evidence="2">
    <location>
        <begin position="88"/>
        <end position="179"/>
    </location>
</feature>
<feature type="region of interest" description="Disordered" evidence="3">
    <location>
        <begin position="184"/>
        <end position="249"/>
    </location>
</feature>
<feature type="compositionally biased region" description="Polar residues" evidence="3">
    <location>
        <begin position="210"/>
        <end position="236"/>
    </location>
</feature>
<feature type="sequence conflict" description="In Ref. 1; AAF04972." evidence="7" ref="1">
    <original>I</original>
    <variation>T</variation>
    <location>
        <position position="122"/>
    </location>
</feature>
<proteinExistence type="evidence at protein level"/>
<name>MAD18_ORYSJ</name>
<keyword id="KW-0010">Activator</keyword>
<keyword id="KW-0217">Developmental protein</keyword>
<keyword id="KW-0221">Differentiation</keyword>
<keyword id="KW-0238">DNA-binding</keyword>
<keyword id="KW-0287">Flowering</keyword>
<keyword id="KW-0539">Nucleus</keyword>
<keyword id="KW-1185">Reference proteome</keyword>
<keyword id="KW-0804">Transcription</keyword>
<keyword id="KW-0805">Transcription regulation</keyword>
<sequence>MGRGPVQLRRIENKINRQVTFSKRRNGLLKKAHEISVLCDADVALIVFSTKGKLYEFSSHSSMEGILERYQRYSFDERAVLEPNTEDQENWGDEYGILKSKLDALQKSQRQLLGEQLDTLTIKELQQLEHQLEYSLKHIRSKKNQLLFESISELQKKEKSLKNQNNVLQKLMETEKEKNNAIINTNREEQNGATPSTSSPTPVTAPDPIPTTNNSQSQPRGSGESEAQPSPAQAGNSKLPPWMLRTSHT</sequence>
<gene>
    <name type="primary">MADS18</name>
    <name type="synonym">MADS2</name>
    <name type="synonym">MADS28</name>
    <name type="ordered locus">Os07g0605200</name>
    <name type="ordered locus">LOC_Os07g41370</name>
    <name evidence="8" type="ORF">OsJ_25046</name>
    <name type="ORF">OSJNBb0040H10.26</name>
</gene>
<reference key="1">
    <citation type="journal article" date="1999" name="Plant Physiol.">
        <title>Determination of the motif responsible for interaction between the rice APETALA1/AGAMOUS-LIKE9 family proteins using a yeast two-hybrid system.</title>
        <authorList>
            <person name="Moon Y.-H."/>
            <person name="Kang H.-G."/>
            <person name="Jung J.-Y."/>
            <person name="Jeon J.-S."/>
            <person name="Sung S.-K."/>
            <person name="An G."/>
        </authorList>
    </citation>
    <scope>NUCLEOTIDE SEQUENCE [MRNA]</scope>
    <scope>NOMENCLATURE</scope>
    <scope>INTERACTION WITH MADS6</scope>
    <source>
        <tissue>Flower</tissue>
    </source>
</reference>
<reference key="2">
    <citation type="submission" date="1998-09" db="EMBL/GenBank/DDBJ databases">
        <title>MADS28 gene.</title>
        <authorList>
            <person name="Colombo L."/>
        </authorList>
    </citation>
    <scope>NUCLEOTIDE SEQUENCE [MRNA]</scope>
    <source>
        <strain>cv. Arborio</strain>
        <tissue>Flower</tissue>
    </source>
</reference>
<reference key="3">
    <citation type="journal article" date="2005" name="Nature">
        <title>The map-based sequence of the rice genome.</title>
        <authorList>
            <consortium name="International rice genome sequencing project (IRGSP)"/>
        </authorList>
    </citation>
    <scope>NUCLEOTIDE SEQUENCE [LARGE SCALE GENOMIC DNA]</scope>
    <source>
        <strain>cv. Nipponbare</strain>
    </source>
</reference>
<reference key="4">
    <citation type="journal article" date="2008" name="Nucleic Acids Res.">
        <title>The rice annotation project database (RAP-DB): 2008 update.</title>
        <authorList>
            <consortium name="The rice annotation project (RAP)"/>
        </authorList>
    </citation>
    <scope>GENOME REANNOTATION</scope>
    <source>
        <strain>cv. Nipponbare</strain>
    </source>
</reference>
<reference key="5">
    <citation type="journal article" date="2013" name="Rice">
        <title>Improvement of the Oryza sativa Nipponbare reference genome using next generation sequence and optical map data.</title>
        <authorList>
            <person name="Kawahara Y."/>
            <person name="de la Bastide M."/>
            <person name="Hamilton J.P."/>
            <person name="Kanamori H."/>
            <person name="McCombie W.R."/>
            <person name="Ouyang S."/>
            <person name="Schwartz D.C."/>
            <person name="Tanaka T."/>
            <person name="Wu J."/>
            <person name="Zhou S."/>
            <person name="Childs K.L."/>
            <person name="Davidson R.M."/>
            <person name="Lin H."/>
            <person name="Quesada-Ocampo L."/>
            <person name="Vaillancourt B."/>
            <person name="Sakai H."/>
            <person name="Lee S.S."/>
            <person name="Kim J."/>
            <person name="Numa H."/>
            <person name="Itoh T."/>
            <person name="Buell C.R."/>
            <person name="Matsumoto T."/>
        </authorList>
    </citation>
    <scope>GENOME REANNOTATION</scope>
    <source>
        <strain>cv. Nipponbare</strain>
    </source>
</reference>
<reference key="6">
    <citation type="journal article" date="2005" name="PLoS Biol.">
        <title>The genomes of Oryza sativa: a history of duplications.</title>
        <authorList>
            <person name="Yu J."/>
            <person name="Wang J."/>
            <person name="Lin W."/>
            <person name="Li S."/>
            <person name="Li H."/>
            <person name="Zhou J."/>
            <person name="Ni P."/>
            <person name="Dong W."/>
            <person name="Hu S."/>
            <person name="Zeng C."/>
            <person name="Zhang J."/>
            <person name="Zhang Y."/>
            <person name="Li R."/>
            <person name="Xu Z."/>
            <person name="Li S."/>
            <person name="Li X."/>
            <person name="Zheng H."/>
            <person name="Cong L."/>
            <person name="Lin L."/>
            <person name="Yin J."/>
            <person name="Geng J."/>
            <person name="Li G."/>
            <person name="Shi J."/>
            <person name="Liu J."/>
            <person name="Lv H."/>
            <person name="Li J."/>
            <person name="Wang J."/>
            <person name="Deng Y."/>
            <person name="Ran L."/>
            <person name="Shi X."/>
            <person name="Wang X."/>
            <person name="Wu Q."/>
            <person name="Li C."/>
            <person name="Ren X."/>
            <person name="Wang J."/>
            <person name="Wang X."/>
            <person name="Li D."/>
            <person name="Liu D."/>
            <person name="Zhang X."/>
            <person name="Ji Z."/>
            <person name="Zhao W."/>
            <person name="Sun Y."/>
            <person name="Zhang Z."/>
            <person name="Bao J."/>
            <person name="Han Y."/>
            <person name="Dong L."/>
            <person name="Ji J."/>
            <person name="Chen P."/>
            <person name="Wu S."/>
            <person name="Liu J."/>
            <person name="Xiao Y."/>
            <person name="Bu D."/>
            <person name="Tan J."/>
            <person name="Yang L."/>
            <person name="Ye C."/>
            <person name="Zhang J."/>
            <person name="Xu J."/>
            <person name="Zhou Y."/>
            <person name="Yu Y."/>
            <person name="Zhang B."/>
            <person name="Zhuang S."/>
            <person name="Wei H."/>
            <person name="Liu B."/>
            <person name="Lei M."/>
            <person name="Yu H."/>
            <person name="Li Y."/>
            <person name="Xu H."/>
            <person name="Wei S."/>
            <person name="He X."/>
            <person name="Fang L."/>
            <person name="Zhang Z."/>
            <person name="Zhang Y."/>
            <person name="Huang X."/>
            <person name="Su Z."/>
            <person name="Tong W."/>
            <person name="Li J."/>
            <person name="Tong Z."/>
            <person name="Li S."/>
            <person name="Ye J."/>
            <person name="Wang L."/>
            <person name="Fang L."/>
            <person name="Lei T."/>
            <person name="Chen C.-S."/>
            <person name="Chen H.-C."/>
            <person name="Xu Z."/>
            <person name="Li H."/>
            <person name="Huang H."/>
            <person name="Zhang F."/>
            <person name="Xu H."/>
            <person name="Li N."/>
            <person name="Zhao C."/>
            <person name="Li S."/>
            <person name="Dong L."/>
            <person name="Huang Y."/>
            <person name="Li L."/>
            <person name="Xi Y."/>
            <person name="Qi Q."/>
            <person name="Li W."/>
            <person name="Zhang B."/>
            <person name="Hu W."/>
            <person name="Zhang Y."/>
            <person name="Tian X."/>
            <person name="Jiao Y."/>
            <person name="Liang X."/>
            <person name="Jin J."/>
            <person name="Gao L."/>
            <person name="Zheng W."/>
            <person name="Hao B."/>
            <person name="Liu S.-M."/>
            <person name="Wang W."/>
            <person name="Yuan L."/>
            <person name="Cao M."/>
            <person name="McDermott J."/>
            <person name="Samudrala R."/>
            <person name="Wang J."/>
            <person name="Wong G.K.-S."/>
            <person name="Yang H."/>
        </authorList>
    </citation>
    <scope>NUCLEOTIDE SEQUENCE [LARGE SCALE GENOMIC DNA]</scope>
    <source>
        <strain>cv. Nipponbare</strain>
    </source>
</reference>
<reference key="7">
    <citation type="journal article" date="2002" name="J. Biol. Chem.">
        <title>Ternary complex formation between MADS-box transcription factors and the histone fold protein NF-YB.</title>
        <authorList>
            <person name="Masiero S."/>
            <person name="Imbriano C."/>
            <person name="Ravasio F."/>
            <person name="Favaro R."/>
            <person name="Pelucchi N."/>
            <person name="Gorla M.S."/>
            <person name="Mantovani R."/>
            <person name="Colombo L."/>
            <person name="Kater M.M."/>
        </authorList>
    </citation>
    <scope>INTERACTION WITH NF-YB1</scope>
    <scope>FUNCTION</scope>
    <scope>TISSUE SPECIFICITY</scope>
</reference>
<reference key="8">
    <citation type="journal article" date="2004" name="Plant Physiol.">
        <title>Functional characterization of OsMADS18, a member of the AP1/SQUA subfamily of MADS box genes.</title>
        <authorList>
            <person name="Fornara F."/>
            <person name="Parenicova L."/>
            <person name="Falasca G."/>
            <person name="Pelucchi N."/>
            <person name="Masiero S."/>
            <person name="Ciannamea S."/>
            <person name="Lopez-Dee Z.P."/>
            <person name="Altamura M.M."/>
            <person name="Colombo L."/>
            <person name="Kater M.M."/>
        </authorList>
    </citation>
    <scope>FUNCTION</scope>
    <scope>DEVELOPMENTAL STAGE</scope>
    <scope>TISSUE SPECIFICITY</scope>
    <scope>INTERACTION WITH MADS6; MADS7; MADS8 AND MADS47</scope>
</reference>
<protein>
    <recommendedName>
        <fullName>MADS-box transcription factor 18</fullName>
    </recommendedName>
    <alternativeName>
        <fullName>FDRMADS7</fullName>
    </alternativeName>
    <alternativeName>
        <fullName>MADS-box protein 2</fullName>
    </alternativeName>
    <alternativeName>
        <fullName>MADS-box protein 28</fullName>
    </alternativeName>
    <alternativeName>
        <fullName>OsMADS18</fullName>
    </alternativeName>
    <alternativeName>
        <fullName>OsMADS2</fullName>
    </alternativeName>
    <alternativeName>
        <fullName>OsMADS28</fullName>
    </alternativeName>
</protein>